<comment type="function">
    <text evidence="1">Specifically methylates the guanosine in position 1516 of 16S rRNA.</text>
</comment>
<comment type="catalytic activity">
    <reaction evidence="1">
        <text>guanosine(1516) in 16S rRNA + S-adenosyl-L-methionine = N(2)-methylguanosine(1516) in 16S rRNA + S-adenosyl-L-homocysteine + H(+)</text>
        <dbReference type="Rhea" id="RHEA:43220"/>
        <dbReference type="Rhea" id="RHEA-COMP:10412"/>
        <dbReference type="Rhea" id="RHEA-COMP:10413"/>
        <dbReference type="ChEBI" id="CHEBI:15378"/>
        <dbReference type="ChEBI" id="CHEBI:57856"/>
        <dbReference type="ChEBI" id="CHEBI:59789"/>
        <dbReference type="ChEBI" id="CHEBI:74269"/>
        <dbReference type="ChEBI" id="CHEBI:74481"/>
        <dbReference type="EC" id="2.1.1.242"/>
    </reaction>
</comment>
<comment type="subcellular location">
    <subcellularLocation>
        <location evidence="1">Cytoplasm</location>
    </subcellularLocation>
</comment>
<comment type="similarity">
    <text evidence="1">Belongs to the methyltransferase superfamily. RsmJ family.</text>
</comment>
<proteinExistence type="inferred from homology"/>
<keyword id="KW-0963">Cytoplasm</keyword>
<keyword id="KW-0489">Methyltransferase</keyword>
<keyword id="KW-0698">rRNA processing</keyword>
<keyword id="KW-0949">S-adenosyl-L-methionine</keyword>
<keyword id="KW-0808">Transferase</keyword>
<feature type="chain" id="PRO_1000198494" description="Ribosomal RNA small subunit methyltransferase J">
    <location>
        <begin position="1"/>
        <end position="250"/>
    </location>
</feature>
<feature type="binding site" evidence="1">
    <location>
        <begin position="101"/>
        <end position="102"/>
    </location>
    <ligand>
        <name>S-adenosyl-L-methionine</name>
        <dbReference type="ChEBI" id="CHEBI:59789"/>
    </ligand>
</feature>
<feature type="binding site" evidence="1">
    <location>
        <begin position="117"/>
        <end position="118"/>
    </location>
    <ligand>
        <name>S-adenosyl-L-methionine</name>
        <dbReference type="ChEBI" id="CHEBI:59789"/>
    </ligand>
</feature>
<feature type="binding site" evidence="1">
    <location>
        <begin position="153"/>
        <end position="154"/>
    </location>
    <ligand>
        <name>S-adenosyl-L-methionine</name>
        <dbReference type="ChEBI" id="CHEBI:59789"/>
    </ligand>
</feature>
<feature type="binding site" evidence="1">
    <location>
        <position position="171"/>
    </location>
    <ligand>
        <name>S-adenosyl-L-methionine</name>
        <dbReference type="ChEBI" id="CHEBI:59789"/>
    </ligand>
</feature>
<name>RSMJ_ECO5E</name>
<gene>
    <name evidence="1" type="primary">rsmJ</name>
    <name type="synonym">yhiQ</name>
    <name type="ordered locus">ECH74115_4844</name>
</gene>
<accession>B5YUS8</accession>
<sequence length="250" mass="26949">MKICLIDETGTGDGALSVLAARWGLEHDEDNLMALVLTPEHLELRKRDEPKLGGIFVDFVGGAMAHRRKFGGGRGEAVAKAVGIKGDYLPDVVDATAGLGRDAFVLASVGCRVRMLERNPVVAALLDDGLARGYADAEIGGWLQERLQLIHASSLTALTDITPRPQVVYLDPMFPHKQKSALVKKEMRVFQSLVGPDLDADGLLEPARLLATKRVVVKRPDYAPPLANVATPNAVVTKGHRFDIYAGTPV</sequence>
<evidence type="ECO:0000255" key="1">
    <source>
        <dbReference type="HAMAP-Rule" id="MF_01523"/>
    </source>
</evidence>
<protein>
    <recommendedName>
        <fullName evidence="1">Ribosomal RNA small subunit methyltransferase J</fullName>
        <ecNumber evidence="1">2.1.1.242</ecNumber>
    </recommendedName>
    <alternativeName>
        <fullName evidence="1">16S rRNA m2G1516 methyltransferase</fullName>
    </alternativeName>
    <alternativeName>
        <fullName evidence="1">rRNA (guanine-N(2)-)-methyltransferase</fullName>
    </alternativeName>
</protein>
<dbReference type="EC" id="2.1.1.242" evidence="1"/>
<dbReference type="EMBL" id="CP001164">
    <property type="protein sequence ID" value="ACI35955.1"/>
    <property type="molecule type" value="Genomic_DNA"/>
</dbReference>
<dbReference type="RefSeq" id="WP_000686620.1">
    <property type="nucleotide sequence ID" value="NC_011353.1"/>
</dbReference>
<dbReference type="SMR" id="B5YUS8"/>
<dbReference type="KEGG" id="ecf:ECH74115_4844"/>
<dbReference type="HOGENOM" id="CLU_076324_0_0_6"/>
<dbReference type="GO" id="GO:0005737">
    <property type="term" value="C:cytoplasm"/>
    <property type="evidence" value="ECO:0007669"/>
    <property type="project" value="UniProtKB-SubCell"/>
</dbReference>
<dbReference type="GO" id="GO:0008990">
    <property type="term" value="F:rRNA (guanine-N2-)-methyltransferase activity"/>
    <property type="evidence" value="ECO:0007669"/>
    <property type="project" value="UniProtKB-UniRule"/>
</dbReference>
<dbReference type="CDD" id="cd02440">
    <property type="entry name" value="AdoMet_MTases"/>
    <property type="match status" value="1"/>
</dbReference>
<dbReference type="FunFam" id="3.40.1630.10:FF:000001">
    <property type="entry name" value="Ribosomal RNA small subunit methyltransferase J"/>
    <property type="match status" value="1"/>
</dbReference>
<dbReference type="FunFam" id="3.40.50.150:FF:000072">
    <property type="entry name" value="Ribosomal RNA small subunit methyltransferase J"/>
    <property type="match status" value="1"/>
</dbReference>
<dbReference type="Gene3D" id="3.40.50.150">
    <property type="entry name" value="Vaccinia Virus protein VP39"/>
    <property type="match status" value="1"/>
</dbReference>
<dbReference type="Gene3D" id="3.40.1630.10">
    <property type="entry name" value="YhiQ-like domain"/>
    <property type="match status" value="1"/>
</dbReference>
<dbReference type="HAMAP" id="MF_01523">
    <property type="entry name" value="16SrRNA_methyltr_J"/>
    <property type="match status" value="1"/>
</dbReference>
<dbReference type="InterPro" id="IPR007536">
    <property type="entry name" value="16SrRNA_methylTrfase_J"/>
</dbReference>
<dbReference type="InterPro" id="IPR029063">
    <property type="entry name" value="SAM-dependent_MTases_sf"/>
</dbReference>
<dbReference type="NCBIfam" id="NF008012">
    <property type="entry name" value="PRK10742.1"/>
    <property type="match status" value="1"/>
</dbReference>
<dbReference type="PANTHER" id="PTHR36112">
    <property type="entry name" value="RIBOSOMAL RNA SMALL SUBUNIT METHYLTRANSFERASE J"/>
    <property type="match status" value="1"/>
</dbReference>
<dbReference type="PANTHER" id="PTHR36112:SF1">
    <property type="entry name" value="RIBOSOMAL RNA SMALL SUBUNIT METHYLTRANSFERASE J"/>
    <property type="match status" value="1"/>
</dbReference>
<dbReference type="Pfam" id="PF04445">
    <property type="entry name" value="SAM_MT"/>
    <property type="match status" value="1"/>
</dbReference>
<dbReference type="SUPFAM" id="SSF53335">
    <property type="entry name" value="S-adenosyl-L-methionine-dependent methyltransferases"/>
    <property type="match status" value="1"/>
</dbReference>
<reference key="1">
    <citation type="journal article" date="2011" name="Proc. Natl. Acad. Sci. U.S.A.">
        <title>Genomic anatomy of Escherichia coli O157:H7 outbreaks.</title>
        <authorList>
            <person name="Eppinger M."/>
            <person name="Mammel M.K."/>
            <person name="Leclerc J.E."/>
            <person name="Ravel J."/>
            <person name="Cebula T.A."/>
        </authorList>
    </citation>
    <scope>NUCLEOTIDE SEQUENCE [LARGE SCALE GENOMIC DNA]</scope>
    <source>
        <strain>EC4115 / EHEC</strain>
    </source>
</reference>
<organism>
    <name type="scientific">Escherichia coli O157:H7 (strain EC4115 / EHEC)</name>
    <dbReference type="NCBI Taxonomy" id="444450"/>
    <lineage>
        <taxon>Bacteria</taxon>
        <taxon>Pseudomonadati</taxon>
        <taxon>Pseudomonadota</taxon>
        <taxon>Gammaproteobacteria</taxon>
        <taxon>Enterobacterales</taxon>
        <taxon>Enterobacteriaceae</taxon>
        <taxon>Escherichia</taxon>
    </lineage>
</organism>